<organism>
    <name type="scientific">Legionella pneumophila (strain Corby)</name>
    <dbReference type="NCBI Taxonomy" id="400673"/>
    <lineage>
        <taxon>Bacteria</taxon>
        <taxon>Pseudomonadati</taxon>
        <taxon>Pseudomonadota</taxon>
        <taxon>Gammaproteobacteria</taxon>
        <taxon>Legionellales</taxon>
        <taxon>Legionellaceae</taxon>
        <taxon>Legionella</taxon>
    </lineage>
</organism>
<dbReference type="EMBL" id="CP000675">
    <property type="protein sequence ID" value="ABQ56845.1"/>
    <property type="molecule type" value="Genomic_DNA"/>
</dbReference>
<dbReference type="RefSeq" id="WP_010946148.1">
    <property type="nucleotide sequence ID" value="NZ_JAPMSS010000006.1"/>
</dbReference>
<dbReference type="SMR" id="A5IHJ5"/>
<dbReference type="GeneID" id="57034402"/>
<dbReference type="KEGG" id="lpc:LPC_2944"/>
<dbReference type="HOGENOM" id="CLU_100590_5_1_6"/>
<dbReference type="GO" id="GO:0005737">
    <property type="term" value="C:cytoplasm"/>
    <property type="evidence" value="ECO:0007669"/>
    <property type="project" value="UniProtKB-ARBA"/>
</dbReference>
<dbReference type="GO" id="GO:0015935">
    <property type="term" value="C:small ribosomal subunit"/>
    <property type="evidence" value="ECO:0007669"/>
    <property type="project" value="TreeGrafter"/>
</dbReference>
<dbReference type="GO" id="GO:0003735">
    <property type="term" value="F:structural constituent of ribosome"/>
    <property type="evidence" value="ECO:0007669"/>
    <property type="project" value="InterPro"/>
</dbReference>
<dbReference type="GO" id="GO:0006412">
    <property type="term" value="P:translation"/>
    <property type="evidence" value="ECO:0007669"/>
    <property type="project" value="UniProtKB-UniRule"/>
</dbReference>
<dbReference type="Gene3D" id="3.30.1320.10">
    <property type="match status" value="1"/>
</dbReference>
<dbReference type="HAMAP" id="MF_00385">
    <property type="entry name" value="Ribosomal_bS16"/>
    <property type="match status" value="1"/>
</dbReference>
<dbReference type="InterPro" id="IPR000307">
    <property type="entry name" value="Ribosomal_bS16"/>
</dbReference>
<dbReference type="InterPro" id="IPR020592">
    <property type="entry name" value="Ribosomal_bS16_CS"/>
</dbReference>
<dbReference type="InterPro" id="IPR023803">
    <property type="entry name" value="Ribosomal_bS16_dom_sf"/>
</dbReference>
<dbReference type="NCBIfam" id="TIGR00002">
    <property type="entry name" value="S16"/>
    <property type="match status" value="1"/>
</dbReference>
<dbReference type="PANTHER" id="PTHR12919">
    <property type="entry name" value="30S RIBOSOMAL PROTEIN S16"/>
    <property type="match status" value="1"/>
</dbReference>
<dbReference type="PANTHER" id="PTHR12919:SF20">
    <property type="entry name" value="SMALL RIBOSOMAL SUBUNIT PROTEIN BS16M"/>
    <property type="match status" value="1"/>
</dbReference>
<dbReference type="Pfam" id="PF00886">
    <property type="entry name" value="Ribosomal_S16"/>
    <property type="match status" value="1"/>
</dbReference>
<dbReference type="SUPFAM" id="SSF54565">
    <property type="entry name" value="Ribosomal protein S16"/>
    <property type="match status" value="1"/>
</dbReference>
<dbReference type="PROSITE" id="PS00732">
    <property type="entry name" value="RIBOSOMAL_S16"/>
    <property type="match status" value="1"/>
</dbReference>
<sequence>MVVIRLSRAGAKKRPFYHMVVTDSRKRRDGNYIERIGYFNPVARGQEVKLHIDMDKMTHWQKVGAQLSDRVSALLKEHSKKSETAA</sequence>
<evidence type="ECO:0000255" key="1">
    <source>
        <dbReference type="HAMAP-Rule" id="MF_00385"/>
    </source>
</evidence>
<evidence type="ECO:0000305" key="2"/>
<keyword id="KW-0687">Ribonucleoprotein</keyword>
<keyword id="KW-0689">Ribosomal protein</keyword>
<proteinExistence type="inferred from homology"/>
<name>RS16_LEGPC</name>
<accession>A5IHJ5</accession>
<gene>
    <name evidence="1" type="primary">rpsP</name>
    <name type="ordered locus">LPC_2944</name>
</gene>
<protein>
    <recommendedName>
        <fullName evidence="1">Small ribosomal subunit protein bS16</fullName>
    </recommendedName>
    <alternativeName>
        <fullName evidence="2">30S ribosomal protein S16</fullName>
    </alternativeName>
</protein>
<comment type="similarity">
    <text evidence="1">Belongs to the bacterial ribosomal protein bS16 family.</text>
</comment>
<feature type="chain" id="PRO_1000049280" description="Small ribosomal subunit protein bS16">
    <location>
        <begin position="1"/>
        <end position="86"/>
    </location>
</feature>
<reference key="1">
    <citation type="submission" date="2006-11" db="EMBL/GenBank/DDBJ databases">
        <title>Identification and characterization of a new conjugation/ type IVA secretion system (trb/tra) of L. pneumophila Corby localized on a mobile genomic island.</title>
        <authorList>
            <person name="Gloeckner G."/>
            <person name="Albert-Weissenberger C."/>
            <person name="Weinmann E."/>
            <person name="Jacobi S."/>
            <person name="Schunder E."/>
            <person name="Steinert M."/>
            <person name="Buchrieser C."/>
            <person name="Hacker J."/>
            <person name="Heuner K."/>
        </authorList>
    </citation>
    <scope>NUCLEOTIDE SEQUENCE [LARGE SCALE GENOMIC DNA]</scope>
    <source>
        <strain>Corby</strain>
    </source>
</reference>